<reference key="1">
    <citation type="journal article" date="2005" name="BMC Biol.">
        <title>The sequence of rice chromosomes 11 and 12, rich in disease resistance genes and recent gene duplications.</title>
        <authorList>
            <consortium name="The rice chromosomes 11 and 12 sequencing consortia"/>
        </authorList>
    </citation>
    <scope>NUCLEOTIDE SEQUENCE [LARGE SCALE GENOMIC DNA]</scope>
    <source>
        <strain>cv. Nipponbare</strain>
    </source>
</reference>
<reference key="2">
    <citation type="journal article" date="2005" name="Nature">
        <title>The map-based sequence of the rice genome.</title>
        <authorList>
            <consortium name="International rice genome sequencing project (IRGSP)"/>
        </authorList>
    </citation>
    <scope>NUCLEOTIDE SEQUENCE [LARGE SCALE GENOMIC DNA]</scope>
    <source>
        <strain>cv. Nipponbare</strain>
    </source>
</reference>
<reference key="3">
    <citation type="journal article" date="2008" name="Nucleic Acids Res.">
        <title>The rice annotation project database (RAP-DB): 2008 update.</title>
        <authorList>
            <consortium name="The rice annotation project (RAP)"/>
        </authorList>
    </citation>
    <scope>GENOME REANNOTATION</scope>
    <source>
        <strain>cv. Nipponbare</strain>
    </source>
</reference>
<reference key="4">
    <citation type="journal article" date="2013" name="Rice">
        <title>Improvement of the Oryza sativa Nipponbare reference genome using next generation sequence and optical map data.</title>
        <authorList>
            <person name="Kawahara Y."/>
            <person name="de la Bastide M."/>
            <person name="Hamilton J.P."/>
            <person name="Kanamori H."/>
            <person name="McCombie W.R."/>
            <person name="Ouyang S."/>
            <person name="Schwartz D.C."/>
            <person name="Tanaka T."/>
            <person name="Wu J."/>
            <person name="Zhou S."/>
            <person name="Childs K.L."/>
            <person name="Davidson R.M."/>
            <person name="Lin H."/>
            <person name="Quesada-Ocampo L."/>
            <person name="Vaillancourt B."/>
            <person name="Sakai H."/>
            <person name="Lee S.S."/>
            <person name="Kim J."/>
            <person name="Numa H."/>
            <person name="Itoh T."/>
            <person name="Buell C.R."/>
            <person name="Matsumoto T."/>
        </authorList>
    </citation>
    <scope>GENOME REANNOTATION</scope>
    <source>
        <strain>cv. Nipponbare</strain>
    </source>
</reference>
<accession>Q2QMT6</accession>
<dbReference type="EMBL" id="DP000011">
    <property type="protein sequence ID" value="ABA99155.1"/>
    <property type="molecule type" value="Genomic_DNA"/>
</dbReference>
<dbReference type="EMBL" id="AP008218">
    <property type="status" value="NOT_ANNOTATED_CDS"/>
    <property type="molecule type" value="Genomic_DNA"/>
</dbReference>
<dbReference type="EMBL" id="AP014968">
    <property type="status" value="NOT_ANNOTATED_CDS"/>
    <property type="molecule type" value="Genomic_DNA"/>
</dbReference>
<dbReference type="SMR" id="Q2QMT6"/>
<dbReference type="FunCoup" id="Q2QMT6">
    <property type="interactions" value="1457"/>
</dbReference>
<dbReference type="STRING" id="39947.Q2QMT6"/>
<dbReference type="PaxDb" id="39947-Q2QMT6"/>
<dbReference type="eggNOG" id="ENOG502S27N">
    <property type="taxonomic scope" value="Eukaryota"/>
</dbReference>
<dbReference type="HOGENOM" id="CLU_015069_0_2_1"/>
<dbReference type="InParanoid" id="Q2QMT6"/>
<dbReference type="Proteomes" id="UP000000763">
    <property type="component" value="Chromosome 12"/>
</dbReference>
<dbReference type="Proteomes" id="UP000059680">
    <property type="component" value="Chromosome 12"/>
</dbReference>
<dbReference type="GO" id="GO:0005634">
    <property type="term" value="C:nucleus"/>
    <property type="evidence" value="ECO:0007669"/>
    <property type="project" value="UniProtKB-SubCell"/>
</dbReference>
<dbReference type="GO" id="GO:0003677">
    <property type="term" value="F:DNA binding"/>
    <property type="evidence" value="ECO:0007669"/>
    <property type="project" value="UniProtKB-KW"/>
</dbReference>
<dbReference type="CDD" id="cd10017">
    <property type="entry name" value="B3_DNA"/>
    <property type="match status" value="3"/>
</dbReference>
<dbReference type="Gene3D" id="2.40.330.10">
    <property type="entry name" value="DNA-binding pseudobarrel domain"/>
    <property type="match status" value="3"/>
</dbReference>
<dbReference type="InterPro" id="IPR003340">
    <property type="entry name" value="B3_DNA-bd"/>
</dbReference>
<dbReference type="InterPro" id="IPR015300">
    <property type="entry name" value="DNA-bd_pseudobarrel_sf"/>
</dbReference>
<dbReference type="InterPro" id="IPR044837">
    <property type="entry name" value="REM16-like"/>
</dbReference>
<dbReference type="PANTHER" id="PTHR31391">
    <property type="entry name" value="B3 DOMAIN-CONTAINING PROTEIN OS11G0197600-RELATED"/>
    <property type="match status" value="1"/>
</dbReference>
<dbReference type="PANTHER" id="PTHR31391:SF140">
    <property type="entry name" value="B3 DOMAIN-CONTAINING PROTEIN OS12G0591400"/>
    <property type="match status" value="1"/>
</dbReference>
<dbReference type="Pfam" id="PF02362">
    <property type="entry name" value="B3"/>
    <property type="match status" value="3"/>
</dbReference>
<dbReference type="SMART" id="SM01019">
    <property type="entry name" value="B3"/>
    <property type="match status" value="3"/>
</dbReference>
<dbReference type="SUPFAM" id="SSF101936">
    <property type="entry name" value="DNA-binding pseudobarrel domain"/>
    <property type="match status" value="3"/>
</dbReference>
<dbReference type="PROSITE" id="PS50863">
    <property type="entry name" value="B3"/>
    <property type="match status" value="3"/>
</dbReference>
<gene>
    <name type="ordered locus">Os12g0591400</name>
    <name type="ordered locus">LOC_Os12g40080</name>
</gene>
<feature type="chain" id="PRO_0000376991" description="B3 domain-containing protein LOC_Os12g40080">
    <location>
        <begin position="1"/>
        <end position="490"/>
    </location>
</feature>
<feature type="DNA-binding region" description="TF-B3 1" evidence="1">
    <location>
        <begin position="24"/>
        <end position="117"/>
    </location>
</feature>
<feature type="DNA-binding region" description="TF-B3 2" evidence="1">
    <location>
        <begin position="236"/>
        <end position="331"/>
    </location>
</feature>
<feature type="DNA-binding region" description="TF-B3 3" evidence="1">
    <location>
        <begin position="389"/>
        <end position="487"/>
    </location>
</feature>
<feature type="region of interest" description="Disordered" evidence="2">
    <location>
        <begin position="161"/>
        <end position="191"/>
    </location>
</feature>
<feature type="compositionally biased region" description="Polar residues" evidence="2">
    <location>
        <begin position="169"/>
        <end position="178"/>
    </location>
</feature>
<protein>
    <recommendedName>
        <fullName>B3 domain-containing protein LOC_Os12g40080</fullName>
    </recommendedName>
</protein>
<organism>
    <name type="scientific">Oryza sativa subsp. japonica</name>
    <name type="common">Rice</name>
    <dbReference type="NCBI Taxonomy" id="39947"/>
    <lineage>
        <taxon>Eukaryota</taxon>
        <taxon>Viridiplantae</taxon>
        <taxon>Streptophyta</taxon>
        <taxon>Embryophyta</taxon>
        <taxon>Tracheophyta</taxon>
        <taxon>Spermatophyta</taxon>
        <taxon>Magnoliopsida</taxon>
        <taxon>Liliopsida</taxon>
        <taxon>Poales</taxon>
        <taxon>Poaceae</taxon>
        <taxon>BOP clade</taxon>
        <taxon>Oryzoideae</taxon>
        <taxon>Oryzeae</taxon>
        <taxon>Oryzinae</taxon>
        <taxon>Oryza</taxon>
        <taxon>Oryza sativa</taxon>
    </lineage>
</organism>
<name>Y1208_ORYSJ</name>
<keyword id="KW-0238">DNA-binding</keyword>
<keyword id="KW-0539">Nucleus</keyword>
<keyword id="KW-1185">Reference proteome</keyword>
<keyword id="KW-0677">Repeat</keyword>
<keyword id="KW-0804">Transcription</keyword>
<keyword id="KW-0805">Transcription regulation</keyword>
<proteinExistence type="inferred from homology"/>
<evidence type="ECO:0000255" key="1">
    <source>
        <dbReference type="PROSITE-ProRule" id="PRU00326"/>
    </source>
</evidence>
<evidence type="ECO:0000256" key="2">
    <source>
        <dbReference type="SAM" id="MobiDB-lite"/>
    </source>
</evidence>
<comment type="subcellular location">
    <subcellularLocation>
        <location evidence="1">Nucleus</location>
    </subcellularLocation>
</comment>
<sequence length="490" mass="55900">MEKSHRVCKNCVANHYWLHMDNHGKSFIKVMITDFKNGVTIPAKFARNFGGQMSGTVKLETRNGKTYEVQVAKELNNLVLRSGWERFASAYELEKGDILVFIYSGNSHFKVWIYDPSACEKGLPCIITEQLPRVQQRSISHNNHTQLKRNAKSAKLYVDSSGHSKETSEINPANSPSWKPTERVPSSEELDEPVDLANVQKATKSFYSLPRMCNMTSAQKAEVDALEKRIKPQIPFYITVMDKASATDGLLAISKDYAVSYLLDKNETIKLCHSGRSMTWDISLDIDTDDQYALSTGWLDFIRNNHLQEGDICVFEASKNKRGVALIFHPLKQSHHPKPPGCVPSTKFPRHGVSKPNYIVSRFTTLSGQLKIKVEAKVQAIQSEIPIFVAVMRESFIRGRSRYMCFSAKYAAKYLPREKNKIMRLRLPNKSYKYKAVFKINNKVHKLGGGWGKFVDDNKIKLGDICLFQLMKNKKKLMMMVHIIRKSEFC</sequence>